<sequence length="610" mass="67448">MTTVNAPEFVRHPKLIAWVEEIANLTKPAKIEWCDGSEEEYQRLIDLMIANGTMQKLNQEKHPGSYLANSDPSDVARVEDRTYICSQNKEDAGATNNWEDPAVMREKLNGLFEGSMKGRTMYVVPFSMGPLGSHIAHIGIELTDSPYVAVSMRKMARMGKAVYDVLGTDGEFVPCVHTVGAPLAEGQKDVAWPCNPEKYIVHYPETREIWSFGSGYGGNALLGKKCLALRIASVMGREQGWLAEHMLILGVTNPQGEKHYIAAAFPSACGKTNFAMLIPPAGYEGWKIETVGDDIAWIKPGEDGRLYAINPEAGFFGVAPGTNTKTNPNCMATLHKDVIYTNVAVTDDGQVWWEGLSKEVPANLTNWKGQPHVNGEKAAHPNARFTVAAGQCPSIDADWENPAGVPISAFIFGGRRADTVPLVSEAFDWVDGVYKAATMGSETTAAAVGQQGIVRRDPFAMLPFAGYNMADYFDHWLNLGAKVSEKAEASGNKLPKIFNVNWFRRDAEGNFVWPGFGQNMRVLEWIIDRCEGRANAVETPIGFVPTYEDLNWEGTEFTKEQFDLITNQDRDQWVTEIESHTELFNKLGERLPKALKERQAALLEAVKTGF</sequence>
<comment type="function">
    <text evidence="1">Catalyzes the conversion of oxaloacetate (OAA) to phosphoenolpyruvate (PEP), the rate-limiting step in the metabolic pathway that produces glucose from lactate and other precursors derived from the citric acid cycle.</text>
</comment>
<comment type="catalytic activity">
    <reaction evidence="1">
        <text>oxaloacetate + GTP = phosphoenolpyruvate + GDP + CO2</text>
        <dbReference type="Rhea" id="RHEA:10388"/>
        <dbReference type="ChEBI" id="CHEBI:16452"/>
        <dbReference type="ChEBI" id="CHEBI:16526"/>
        <dbReference type="ChEBI" id="CHEBI:37565"/>
        <dbReference type="ChEBI" id="CHEBI:58189"/>
        <dbReference type="ChEBI" id="CHEBI:58702"/>
        <dbReference type="EC" id="4.1.1.32"/>
    </reaction>
</comment>
<comment type="cofactor">
    <cofactor evidence="1">
        <name>Mn(2+)</name>
        <dbReference type="ChEBI" id="CHEBI:29035"/>
    </cofactor>
    <text evidence="1">Binds 1 Mn(2+) ion per subunit.</text>
</comment>
<comment type="pathway">
    <text evidence="1">Carbohydrate biosynthesis; gluconeogenesis.</text>
</comment>
<comment type="subunit">
    <text evidence="1">Monomer.</text>
</comment>
<comment type="subcellular location">
    <subcellularLocation>
        <location evidence="1">Cytoplasm</location>
    </subcellularLocation>
</comment>
<comment type="similarity">
    <text evidence="1">Belongs to the phosphoenolpyruvate carboxykinase [GTP] family.</text>
</comment>
<name>PCKG_ACIBY</name>
<protein>
    <recommendedName>
        <fullName evidence="1">Phosphoenolpyruvate carboxykinase [GTP]</fullName>
        <shortName evidence="1">PEP carboxykinase</shortName>
        <shortName evidence="1">PEPCK</shortName>
        <ecNumber evidence="1">4.1.1.32</ecNumber>
    </recommendedName>
</protein>
<gene>
    <name evidence="1" type="primary">pckG</name>
    <name type="ordered locus">ABAYE0818</name>
</gene>
<reference key="1">
    <citation type="journal article" date="2008" name="PLoS ONE">
        <title>Comparative analysis of Acinetobacters: three genomes for three lifestyles.</title>
        <authorList>
            <person name="Vallenet D."/>
            <person name="Nordmann P."/>
            <person name="Barbe V."/>
            <person name="Poirel L."/>
            <person name="Mangenot S."/>
            <person name="Bataille E."/>
            <person name="Dossat C."/>
            <person name="Gas S."/>
            <person name="Kreimeyer A."/>
            <person name="Lenoble P."/>
            <person name="Oztas S."/>
            <person name="Poulain J."/>
            <person name="Segurens B."/>
            <person name="Robert C."/>
            <person name="Abergel C."/>
            <person name="Claverie J.-M."/>
            <person name="Raoult D."/>
            <person name="Medigue C."/>
            <person name="Weissenbach J."/>
            <person name="Cruveiller S."/>
        </authorList>
    </citation>
    <scope>NUCLEOTIDE SEQUENCE [LARGE SCALE GENOMIC DNA]</scope>
    <source>
        <strain>AYE</strain>
    </source>
</reference>
<evidence type="ECO:0000255" key="1">
    <source>
        <dbReference type="HAMAP-Rule" id="MF_00452"/>
    </source>
</evidence>
<dbReference type="EC" id="4.1.1.32" evidence="1"/>
<dbReference type="EMBL" id="CU459141">
    <property type="protein sequence ID" value="CAM85771.1"/>
    <property type="molecule type" value="Genomic_DNA"/>
</dbReference>
<dbReference type="RefSeq" id="WP_000214356.1">
    <property type="nucleotide sequence ID" value="NZ_JBDGFB010000030.1"/>
</dbReference>
<dbReference type="SMR" id="B0VDR1"/>
<dbReference type="EnsemblBacteria" id="CAM85771">
    <property type="protein sequence ID" value="CAM85771"/>
    <property type="gene ID" value="ABAYE0818"/>
</dbReference>
<dbReference type="KEGG" id="aby:ABAYE0818"/>
<dbReference type="HOGENOM" id="CLU_028872_1_1_6"/>
<dbReference type="UniPathway" id="UPA00138"/>
<dbReference type="GO" id="GO:0005829">
    <property type="term" value="C:cytosol"/>
    <property type="evidence" value="ECO:0007669"/>
    <property type="project" value="TreeGrafter"/>
</dbReference>
<dbReference type="GO" id="GO:0005525">
    <property type="term" value="F:GTP binding"/>
    <property type="evidence" value="ECO:0007669"/>
    <property type="project" value="UniProtKB-UniRule"/>
</dbReference>
<dbReference type="GO" id="GO:0030145">
    <property type="term" value="F:manganese ion binding"/>
    <property type="evidence" value="ECO:0007669"/>
    <property type="project" value="UniProtKB-UniRule"/>
</dbReference>
<dbReference type="GO" id="GO:0004613">
    <property type="term" value="F:phosphoenolpyruvate carboxykinase (GTP) activity"/>
    <property type="evidence" value="ECO:0007669"/>
    <property type="project" value="UniProtKB-UniRule"/>
</dbReference>
<dbReference type="GO" id="GO:0071333">
    <property type="term" value="P:cellular response to glucose stimulus"/>
    <property type="evidence" value="ECO:0007669"/>
    <property type="project" value="TreeGrafter"/>
</dbReference>
<dbReference type="GO" id="GO:0006094">
    <property type="term" value="P:gluconeogenesis"/>
    <property type="evidence" value="ECO:0007669"/>
    <property type="project" value="UniProtKB-UniRule"/>
</dbReference>
<dbReference type="GO" id="GO:0046327">
    <property type="term" value="P:glycerol biosynthetic process from pyruvate"/>
    <property type="evidence" value="ECO:0007669"/>
    <property type="project" value="TreeGrafter"/>
</dbReference>
<dbReference type="GO" id="GO:0006107">
    <property type="term" value="P:oxaloacetate metabolic process"/>
    <property type="evidence" value="ECO:0007669"/>
    <property type="project" value="TreeGrafter"/>
</dbReference>
<dbReference type="GO" id="GO:0019543">
    <property type="term" value="P:propionate catabolic process"/>
    <property type="evidence" value="ECO:0007669"/>
    <property type="project" value="TreeGrafter"/>
</dbReference>
<dbReference type="GO" id="GO:0033993">
    <property type="term" value="P:response to lipid"/>
    <property type="evidence" value="ECO:0007669"/>
    <property type="project" value="TreeGrafter"/>
</dbReference>
<dbReference type="GO" id="GO:0042594">
    <property type="term" value="P:response to starvation"/>
    <property type="evidence" value="ECO:0007669"/>
    <property type="project" value="TreeGrafter"/>
</dbReference>
<dbReference type="CDD" id="cd00819">
    <property type="entry name" value="PEPCK_GTP"/>
    <property type="match status" value="1"/>
</dbReference>
<dbReference type="FunFam" id="3.40.449.10:FF:000005">
    <property type="entry name" value="Phosphoenolpyruvate carboxykinase [GTP]"/>
    <property type="match status" value="1"/>
</dbReference>
<dbReference type="Gene3D" id="3.90.228.20">
    <property type="match status" value="1"/>
</dbReference>
<dbReference type="Gene3D" id="3.40.449.10">
    <property type="entry name" value="Phosphoenolpyruvate Carboxykinase, domain 1"/>
    <property type="match status" value="1"/>
</dbReference>
<dbReference type="Gene3D" id="2.170.8.10">
    <property type="entry name" value="Phosphoenolpyruvate Carboxykinase, domain 2"/>
    <property type="match status" value="1"/>
</dbReference>
<dbReference type="HAMAP" id="MF_00452">
    <property type="entry name" value="PEPCK_GTP"/>
    <property type="match status" value="1"/>
</dbReference>
<dbReference type="InterPro" id="IPR018091">
    <property type="entry name" value="PEP_carboxykin_GTP_CS"/>
</dbReference>
<dbReference type="InterPro" id="IPR013035">
    <property type="entry name" value="PEP_carboxykinase_C"/>
</dbReference>
<dbReference type="InterPro" id="IPR008209">
    <property type="entry name" value="PEP_carboxykinase_GTP"/>
</dbReference>
<dbReference type="InterPro" id="IPR035077">
    <property type="entry name" value="PEP_carboxykinase_GTP_C"/>
</dbReference>
<dbReference type="InterPro" id="IPR035078">
    <property type="entry name" value="PEP_carboxykinase_GTP_N"/>
</dbReference>
<dbReference type="InterPro" id="IPR008210">
    <property type="entry name" value="PEP_carboxykinase_N"/>
</dbReference>
<dbReference type="NCBIfam" id="NF003253">
    <property type="entry name" value="PRK04210.1"/>
    <property type="match status" value="1"/>
</dbReference>
<dbReference type="PANTHER" id="PTHR11561">
    <property type="entry name" value="PHOSPHOENOLPYRUVATE CARBOXYKINASE"/>
    <property type="match status" value="1"/>
</dbReference>
<dbReference type="PANTHER" id="PTHR11561:SF0">
    <property type="entry name" value="PHOSPHOENOLPYRUVATE CARBOXYKINASE [GTP]-RELATED"/>
    <property type="match status" value="1"/>
</dbReference>
<dbReference type="Pfam" id="PF00821">
    <property type="entry name" value="PEPCK_GTP"/>
    <property type="match status" value="1"/>
</dbReference>
<dbReference type="Pfam" id="PF17297">
    <property type="entry name" value="PEPCK_N"/>
    <property type="match status" value="1"/>
</dbReference>
<dbReference type="PIRSF" id="PIRSF001348">
    <property type="entry name" value="PEP_carboxykinase_GTP"/>
    <property type="match status" value="1"/>
</dbReference>
<dbReference type="SUPFAM" id="SSF68923">
    <property type="entry name" value="PEP carboxykinase N-terminal domain"/>
    <property type="match status" value="1"/>
</dbReference>
<dbReference type="SUPFAM" id="SSF53795">
    <property type="entry name" value="PEP carboxykinase-like"/>
    <property type="match status" value="1"/>
</dbReference>
<dbReference type="PROSITE" id="PS00505">
    <property type="entry name" value="PEPCK_GTP"/>
    <property type="match status" value="1"/>
</dbReference>
<accession>B0VDR1</accession>
<proteinExistence type="inferred from homology"/>
<keyword id="KW-0963">Cytoplasm</keyword>
<keyword id="KW-0210">Decarboxylase</keyword>
<keyword id="KW-0312">Gluconeogenesis</keyword>
<keyword id="KW-0342">GTP-binding</keyword>
<keyword id="KW-0456">Lyase</keyword>
<keyword id="KW-0464">Manganese</keyword>
<keyword id="KW-0479">Metal-binding</keyword>
<keyword id="KW-0547">Nucleotide-binding</keyword>
<feature type="chain" id="PRO_1000125042" description="Phosphoenolpyruvate carboxykinase [GTP]">
    <location>
        <begin position="1"/>
        <end position="610"/>
    </location>
</feature>
<feature type="active site" evidence="1">
    <location>
        <position position="269"/>
    </location>
</feature>
<feature type="binding site" evidence="1">
    <location>
        <position position="77"/>
    </location>
    <ligand>
        <name>substrate</name>
    </ligand>
</feature>
<feature type="binding site" evidence="1">
    <location>
        <begin position="216"/>
        <end position="218"/>
    </location>
    <ligand>
        <name>substrate</name>
    </ligand>
</feature>
<feature type="binding site" evidence="1">
    <location>
        <position position="225"/>
    </location>
    <ligand>
        <name>Mn(2+)</name>
        <dbReference type="ChEBI" id="CHEBI:29035"/>
    </ligand>
</feature>
<feature type="binding site" evidence="1">
    <location>
        <position position="245"/>
    </location>
    <ligand>
        <name>Mn(2+)</name>
        <dbReference type="ChEBI" id="CHEBI:29035"/>
    </ligand>
</feature>
<feature type="binding site" evidence="1">
    <location>
        <position position="267"/>
    </location>
    <ligand>
        <name>substrate</name>
    </ligand>
</feature>
<feature type="binding site" evidence="1">
    <location>
        <begin position="268"/>
        <end position="273"/>
    </location>
    <ligand>
        <name>GTP</name>
        <dbReference type="ChEBI" id="CHEBI:37565"/>
    </ligand>
</feature>
<feature type="binding site" evidence="1">
    <location>
        <position position="294"/>
    </location>
    <ligand>
        <name>Mn(2+)</name>
        <dbReference type="ChEBI" id="CHEBI:29035"/>
    </ligand>
</feature>
<feature type="binding site" evidence="1">
    <location>
        <begin position="382"/>
        <end position="384"/>
    </location>
    <ligand>
        <name>substrate</name>
    </ligand>
</feature>
<feature type="binding site" evidence="1">
    <location>
        <position position="384"/>
    </location>
    <ligand>
        <name>GTP</name>
        <dbReference type="ChEBI" id="CHEBI:37565"/>
    </ligand>
</feature>
<feature type="binding site" evidence="1">
    <location>
        <position position="415"/>
    </location>
    <ligand>
        <name>GTP</name>
        <dbReference type="ChEBI" id="CHEBI:37565"/>
    </ligand>
</feature>
<feature type="binding site" evidence="1">
    <location>
        <begin position="516"/>
        <end position="519"/>
    </location>
    <ligand>
        <name>GTP</name>
        <dbReference type="ChEBI" id="CHEBI:37565"/>
    </ligand>
</feature>
<organism>
    <name type="scientific">Acinetobacter baumannii (strain AYE)</name>
    <dbReference type="NCBI Taxonomy" id="509173"/>
    <lineage>
        <taxon>Bacteria</taxon>
        <taxon>Pseudomonadati</taxon>
        <taxon>Pseudomonadota</taxon>
        <taxon>Gammaproteobacteria</taxon>
        <taxon>Moraxellales</taxon>
        <taxon>Moraxellaceae</taxon>
        <taxon>Acinetobacter</taxon>
        <taxon>Acinetobacter calcoaceticus/baumannii complex</taxon>
    </lineage>
</organism>